<accession>E9P886</accession>
<accession>O17720</accession>
<reference evidence="9" key="1">
    <citation type="journal article" date="1998" name="Science">
        <title>Genome sequence of the nematode C. elegans: a platform for investigating biology.</title>
        <authorList>
            <consortium name="The C. elegans sequencing consortium"/>
        </authorList>
    </citation>
    <scope>NUCLEOTIDE SEQUENCE [LARGE SCALE GENOMIC DNA]</scope>
    <source>
        <strain evidence="9">Bristol N2</strain>
    </source>
</reference>
<reference evidence="8" key="2">
    <citation type="journal article" date="2010" name="J. Biol. Chem.">
        <title>Identification of tubulin deglutamylase among Caenorhabditis elegans and mammalian cytosolic carboxypeptidases (CCPs).</title>
        <authorList>
            <person name="Kimura Y."/>
            <person name="Kurabe N."/>
            <person name="Ikegami K."/>
            <person name="Tsutsumi K."/>
            <person name="Konishi Y."/>
            <person name="Kaplan O.I."/>
            <person name="Kunitomo H."/>
            <person name="Iino Y."/>
            <person name="Blacque O.E."/>
            <person name="Setou M."/>
        </authorList>
    </citation>
    <scope>TISSUE SPECIFICITY</scope>
</reference>
<reference evidence="8" key="3">
    <citation type="journal article" date="2012" name="Dev. Cell">
        <title>Kinesin-13 and tubulin posttranslational modifications regulate microtubule growth in axon regeneration.</title>
        <authorList>
            <person name="Ghosh-Roy A."/>
            <person name="Goncharov A."/>
            <person name="Jin Y."/>
            <person name="Chisholm A.D."/>
        </authorList>
    </citation>
    <scope>FUNCTION</scope>
</reference>
<reference evidence="8" key="4">
    <citation type="journal article" date="2016" name="Biol. Open">
        <title>Caenorhabditis elegans glutamylating enzymes function redundantly in male mating.</title>
        <authorList>
            <person name="Chawla D.G."/>
            <person name="Shah R.V."/>
            <person name="Barth Z.K."/>
            <person name="Lee J.D."/>
            <person name="Badecker K.E."/>
            <person name="Naik A."/>
            <person name="Brewster M.M."/>
            <person name="Salmon T.P."/>
            <person name="Peel N."/>
        </authorList>
    </citation>
    <scope>FUNCTION</scope>
    <scope>DEVELOPMENTAL STAGE</scope>
</reference>
<sequence>MKPKNVPREIFNPFTNKTSLGTRREGLFLCKRLKLRPDNYLEEYCADLEVIDIMAPIRPADETERCPPTSTSDDQEAGDYLVSRNKKSRNSDYMLFSSDALVHIAHDAKVSEKYTWLGERLRLTFKMMRSDSRLIRTMCHSHGFMQCSSKNPSVNVIWMGAPVKSVRMRELMPWQRLNQFPRSTELTKKDRLYENIERSKSIFGESFDFIPEFYVTPRENRKMENAFVRVAKEIAAAGGELCFPGEFIVKPTNSRQGKGIFFANSMADIPAEGPLLVSRYLKDPYLVNNHKFDLRIYVAVTSFYPLVAYVYSEGLARLASRPYDTSASSADSNEYVHLTNYSINKNSTSFVRNESMSSEDLGHKWTLGALLRYVENEGKDAKLLMLRIEDLIVKSLLSIQNSVATASRTNLRFACTNFELFGFDVLVDQALKPWLLEVNLSPSLACDAPLDSLLKTRLIADLLNLACVPLLDRKIIDSVTPALRKSMNSQESESSETDDLELDPMCAKTLKRRPVGLKRSVLNKKIVSGSTSLIPNNEKKFDQIVRKAELEDGRRGDFIRVFPRNGTWGMYSPVMEDLGNEDFDERLFDEVVTKKNTKNSSGSSKASSSSASASSSSSSMHIEDLSDLFHEVMMQCDKYSSIADVPIEIREIISPWYEEASEYTKKITQEGETYACKLPVIRSTARLRTKSCAEFYEVRKVQLAKKKESEAMASKENEPIVLQAVVAKRI</sequence>
<gene>
    <name evidence="11" type="primary">ttll-5</name>
    <name evidence="11" type="ORF">C55A6.2</name>
</gene>
<name>TTLL5_CAEEL</name>
<keyword id="KW-0025">Alternative splicing</keyword>
<keyword id="KW-0067">ATP-binding</keyword>
<keyword id="KW-0436">Ligase</keyword>
<keyword id="KW-0547">Nucleotide-binding</keyword>
<keyword id="KW-1185">Reference proteome</keyword>
<feature type="chain" id="PRO_0000447855" description="Tubulin polyglutamylase ttll-5">
    <location>
        <begin position="1"/>
        <end position="730"/>
    </location>
</feature>
<feature type="domain" description="TTL" evidence="3">
    <location>
        <begin position="120"/>
        <end position="478"/>
    </location>
</feature>
<feature type="region of interest" description="Disordered" evidence="4">
    <location>
        <begin position="594"/>
        <end position="618"/>
    </location>
</feature>
<feature type="compositionally biased region" description="Low complexity" evidence="4">
    <location>
        <begin position="600"/>
        <end position="618"/>
    </location>
</feature>
<feature type="binding site" evidence="1">
    <location>
        <begin position="278"/>
        <end position="281"/>
    </location>
    <ligand>
        <name>ATP</name>
        <dbReference type="ChEBI" id="CHEBI:30616"/>
    </ligand>
</feature>
<feature type="binding site" evidence="1">
    <location>
        <position position="291"/>
    </location>
    <ligand>
        <name>ATP</name>
        <dbReference type="ChEBI" id="CHEBI:30616"/>
    </ligand>
</feature>
<feature type="binding site" evidence="1">
    <location>
        <position position="293"/>
    </location>
    <ligand>
        <name>ATP</name>
        <dbReference type="ChEBI" id="CHEBI:30616"/>
    </ligand>
</feature>
<feature type="splice variant" id="VSP_060272" description="In isoform a." evidence="8">
    <location>
        <begin position="1"/>
        <end position="53"/>
    </location>
</feature>
<comment type="function">
    <text evidence="2 6 7">Polyglutamylase which preferentially modifies alpha-tubulin (By similarity). Involved in the side-chain initiation step of the polyglutamylation reaction rather than in the elongation step (By similarity). Together with ttll-4 and ttll-11, required for male mating (PubMed:27635036). Probably by regulating microtubule stability via the glutamylation of tubulin, negatively regulates axon regrowth after injury in PLM neurons (PubMed:23000142).</text>
</comment>
<comment type="catalytic activity">
    <reaction evidence="2">
        <text>L-glutamyl-[protein] + L-glutamate + ATP = gamma-L-glutamyl-L-glutamyl-[protein] + ADP + phosphate + H(+)</text>
        <dbReference type="Rhea" id="RHEA:60144"/>
        <dbReference type="Rhea" id="RHEA-COMP:10208"/>
        <dbReference type="Rhea" id="RHEA-COMP:15517"/>
        <dbReference type="ChEBI" id="CHEBI:15378"/>
        <dbReference type="ChEBI" id="CHEBI:29973"/>
        <dbReference type="ChEBI" id="CHEBI:29985"/>
        <dbReference type="ChEBI" id="CHEBI:30616"/>
        <dbReference type="ChEBI" id="CHEBI:43474"/>
        <dbReference type="ChEBI" id="CHEBI:143622"/>
        <dbReference type="ChEBI" id="CHEBI:456216"/>
    </reaction>
    <physiologicalReaction direction="left-to-right" evidence="2">
        <dbReference type="Rhea" id="RHEA:60145"/>
    </physiologicalReaction>
</comment>
<comment type="alternative products">
    <event type="alternative splicing"/>
    <isoform>
        <id>E9P886-1</id>
        <name evidence="11">b</name>
        <sequence type="displayed"/>
    </isoform>
    <isoform>
        <id>E9P886-2</id>
        <name evidence="10">a</name>
        <sequence type="described" ref="VSP_060272"/>
    </isoform>
</comment>
<comment type="tissue specificity">
    <text evidence="5">Expressed in body wall muscles (PubMed:20519502). Not expressed in sensory neurons (PubMed:20519502).</text>
</comment>
<comment type="developmental stage">
    <text evidence="7">Expressed in embryos and adults.</text>
</comment>
<comment type="similarity">
    <text evidence="8">Belongs to the tubulin--tyrosine ligase family.</text>
</comment>
<organism evidence="9">
    <name type="scientific">Caenorhabditis elegans</name>
    <dbReference type="NCBI Taxonomy" id="6239"/>
    <lineage>
        <taxon>Eukaryota</taxon>
        <taxon>Metazoa</taxon>
        <taxon>Ecdysozoa</taxon>
        <taxon>Nematoda</taxon>
        <taxon>Chromadorea</taxon>
        <taxon>Rhabditida</taxon>
        <taxon>Rhabditina</taxon>
        <taxon>Rhabditomorpha</taxon>
        <taxon>Rhabditoidea</taxon>
        <taxon>Rhabditidae</taxon>
        <taxon>Peloderinae</taxon>
        <taxon>Caenorhabditis</taxon>
    </lineage>
</organism>
<evidence type="ECO:0000250" key="1">
    <source>
        <dbReference type="UniProtKB" id="Q6ZT98"/>
    </source>
</evidence>
<evidence type="ECO:0000250" key="2">
    <source>
        <dbReference type="UniProtKB" id="Q8CHB8"/>
    </source>
</evidence>
<evidence type="ECO:0000255" key="3">
    <source>
        <dbReference type="PROSITE-ProRule" id="PRU00568"/>
    </source>
</evidence>
<evidence type="ECO:0000256" key="4">
    <source>
        <dbReference type="SAM" id="MobiDB-lite"/>
    </source>
</evidence>
<evidence type="ECO:0000269" key="5">
    <source>
    </source>
</evidence>
<evidence type="ECO:0000269" key="6">
    <source>
    </source>
</evidence>
<evidence type="ECO:0000269" key="7">
    <source>
    </source>
</evidence>
<evidence type="ECO:0000305" key="8"/>
<evidence type="ECO:0000312" key="9">
    <source>
        <dbReference type="Proteomes" id="UP000001940"/>
    </source>
</evidence>
<evidence type="ECO:0000312" key="10">
    <source>
        <dbReference type="WormBase" id="C55A6.2a"/>
    </source>
</evidence>
<evidence type="ECO:0000312" key="11">
    <source>
        <dbReference type="WormBase" id="C55A6.2b"/>
    </source>
</evidence>
<proteinExistence type="evidence at transcript level"/>
<protein>
    <recommendedName>
        <fullName evidence="8">Tubulin polyglutamylase ttll-5</fullName>
        <ecNumber evidence="2">6.-.-.-</ecNumber>
    </recommendedName>
    <alternativeName>
        <fullName evidence="11">Tubulin--tyrosine ligase-like protein 5</fullName>
    </alternativeName>
</protein>
<dbReference type="EC" id="6.-.-.-" evidence="2"/>
<dbReference type="EMBL" id="BX284605">
    <property type="protein sequence ID" value="CAB02862.3"/>
    <property type="molecule type" value="Genomic_DNA"/>
</dbReference>
<dbReference type="EMBL" id="BX284605">
    <property type="protein sequence ID" value="CBZ01788.1"/>
    <property type="molecule type" value="Genomic_DNA"/>
</dbReference>
<dbReference type="PIR" id="C89217">
    <property type="entry name" value="C89217"/>
</dbReference>
<dbReference type="PIR" id="T20262">
    <property type="entry name" value="T20262"/>
</dbReference>
<dbReference type="RefSeq" id="NP_001256331.1">
    <molecule id="E9P886-1"/>
    <property type="nucleotide sequence ID" value="NM_001269402.3"/>
</dbReference>
<dbReference type="RefSeq" id="NP_001256332.1">
    <property type="nucleotide sequence ID" value="NM_001269403.1"/>
</dbReference>
<dbReference type="RefSeq" id="NP_001379188.1">
    <molecule id="E9P886-2"/>
    <property type="nucleotide sequence ID" value="NM_001392617.1"/>
</dbReference>
<dbReference type="SMR" id="E9P886"/>
<dbReference type="FunCoup" id="E9P886">
    <property type="interactions" value="19"/>
</dbReference>
<dbReference type="STRING" id="6239.C55A6.2b.1"/>
<dbReference type="PaxDb" id="6239-C55A6.2b"/>
<dbReference type="PeptideAtlas" id="E9P886"/>
<dbReference type="EnsemblMetazoa" id="C55A6.2a.1">
    <molecule id="E9P886-2"/>
    <property type="protein sequence ID" value="C55A6.2a.1"/>
    <property type="gene ID" value="WBGene00008331"/>
</dbReference>
<dbReference type="EnsemblMetazoa" id="C55A6.2b.1">
    <molecule id="E9P886-1"/>
    <property type="protein sequence ID" value="C55A6.2b.1"/>
    <property type="gene ID" value="WBGene00008331"/>
</dbReference>
<dbReference type="GeneID" id="179582"/>
<dbReference type="KEGG" id="cel:CELE_C55A6.2"/>
<dbReference type="UCSC" id="C55A6.2">
    <property type="organism name" value="c. elegans"/>
</dbReference>
<dbReference type="AGR" id="WB:WBGene00008331"/>
<dbReference type="CTD" id="179582"/>
<dbReference type="WormBase" id="C55A6.2a">
    <molecule id="E9P886-2"/>
    <property type="protein sequence ID" value="CE29733"/>
    <property type="gene ID" value="WBGene00008331"/>
    <property type="gene designation" value="ttll-5"/>
</dbReference>
<dbReference type="WormBase" id="C55A6.2b">
    <molecule id="E9P886-1"/>
    <property type="protein sequence ID" value="CE45770"/>
    <property type="gene ID" value="WBGene00008331"/>
    <property type="gene designation" value="ttll-5"/>
</dbReference>
<dbReference type="eggNOG" id="KOG2157">
    <property type="taxonomic scope" value="Eukaryota"/>
</dbReference>
<dbReference type="eggNOG" id="KOG4506">
    <property type="taxonomic scope" value="Eukaryota"/>
</dbReference>
<dbReference type="GeneTree" id="ENSGT00940000162910"/>
<dbReference type="HOGENOM" id="CLU_010131_1_4_1"/>
<dbReference type="InParanoid" id="E9P886"/>
<dbReference type="OMA" id="NGIFIIQ"/>
<dbReference type="OrthoDB" id="2016263at2759"/>
<dbReference type="PhylomeDB" id="E9P886"/>
<dbReference type="PRO" id="PR:E9P886"/>
<dbReference type="Proteomes" id="UP000001940">
    <property type="component" value="Chromosome V"/>
</dbReference>
<dbReference type="GO" id="GO:0036064">
    <property type="term" value="C:ciliary basal body"/>
    <property type="evidence" value="ECO:0000318"/>
    <property type="project" value="GO_Central"/>
</dbReference>
<dbReference type="GO" id="GO:0005524">
    <property type="term" value="F:ATP binding"/>
    <property type="evidence" value="ECO:0007669"/>
    <property type="project" value="UniProtKB-KW"/>
</dbReference>
<dbReference type="GO" id="GO:0106437">
    <property type="term" value="F:protein-glutamic acid ligase activity, initiating"/>
    <property type="evidence" value="ECO:0007669"/>
    <property type="project" value="RHEA"/>
</dbReference>
<dbReference type="GO" id="GO:0015631">
    <property type="term" value="F:tubulin binding"/>
    <property type="evidence" value="ECO:0000318"/>
    <property type="project" value="GO_Central"/>
</dbReference>
<dbReference type="GO" id="GO:0070740">
    <property type="term" value="F:tubulin-glutamic acid ligase activity"/>
    <property type="evidence" value="ECO:0000318"/>
    <property type="project" value="GO_Central"/>
</dbReference>
<dbReference type="GO" id="GO:0000226">
    <property type="term" value="P:microtubule cytoskeleton organization"/>
    <property type="evidence" value="ECO:0000318"/>
    <property type="project" value="GO_Central"/>
</dbReference>
<dbReference type="GO" id="GO:0036211">
    <property type="term" value="P:protein modification process"/>
    <property type="evidence" value="ECO:0007669"/>
    <property type="project" value="InterPro"/>
</dbReference>
<dbReference type="GO" id="GO:0034606">
    <property type="term" value="P:response to hermaphrodite contact"/>
    <property type="evidence" value="ECO:0000316"/>
    <property type="project" value="UniProtKB"/>
</dbReference>
<dbReference type="Gene3D" id="3.30.470.20">
    <property type="entry name" value="ATP-grasp fold, B domain"/>
    <property type="match status" value="1"/>
</dbReference>
<dbReference type="InterPro" id="IPR004344">
    <property type="entry name" value="TTL/TTLL_fam"/>
</dbReference>
<dbReference type="PANTHER" id="PTHR12241">
    <property type="entry name" value="TUBULIN POLYGLUTAMYLASE"/>
    <property type="match status" value="1"/>
</dbReference>
<dbReference type="PANTHER" id="PTHR12241:SF145">
    <property type="entry name" value="TUBULIN POLYGLUTAMYLASE TTLL5"/>
    <property type="match status" value="1"/>
</dbReference>
<dbReference type="Pfam" id="PF03133">
    <property type="entry name" value="TTL"/>
    <property type="match status" value="1"/>
</dbReference>
<dbReference type="SUPFAM" id="SSF56059">
    <property type="entry name" value="Glutathione synthetase ATP-binding domain-like"/>
    <property type="match status" value="1"/>
</dbReference>
<dbReference type="PROSITE" id="PS51221">
    <property type="entry name" value="TTL"/>
    <property type="match status" value="1"/>
</dbReference>